<organism>
    <name type="scientific">Schizosaccharomyces pombe (strain 972 / ATCC 24843)</name>
    <name type="common">Fission yeast</name>
    <dbReference type="NCBI Taxonomy" id="284812"/>
    <lineage>
        <taxon>Eukaryota</taxon>
        <taxon>Fungi</taxon>
        <taxon>Dikarya</taxon>
        <taxon>Ascomycota</taxon>
        <taxon>Taphrinomycotina</taxon>
        <taxon>Schizosaccharomycetes</taxon>
        <taxon>Schizosaccharomycetales</taxon>
        <taxon>Schizosaccharomycetaceae</taxon>
        <taxon>Schizosaccharomyces</taxon>
    </lineage>
</organism>
<gene>
    <name type="primary">rsm23</name>
    <name type="ORF">SPBC29A3.15c</name>
</gene>
<comment type="function">
    <text evidence="1">Component of the mitochondrial ribosome (mitoribosome), a dedicated translation machinery responsible for the synthesis of mitochondrial genome-encoded proteins, including at least some of the essential transmembrane subunits of the mitochondrial respiratory chain. The mitoribosomes are attached to the mitochondrial inner membrane and translation products are cotranslationally integrated into the membrane. mS29 binds GTP and is probably an active GTPase. GTP hydrolysis may be linked to subunit association. mS29 also has an extraribosomal function, being required for maintenance of mitochondrial DNA.</text>
</comment>
<comment type="subunit">
    <text evidence="1">Component of the mitochondrial small ribosomal subunit (mt-SSU). Mature yeast 74S mitochondrial ribosomes consist of a small (37S) and a large (54S) subunit. The 37S small subunit contains a 15S ribosomal RNA (15S mt-rRNA) and at least 32 different proteins. The 54S large subunit contains a 21S rRNA (21S mt-rRNA) and at least 45 different proteins.</text>
</comment>
<comment type="subcellular location">
    <subcellularLocation>
        <location evidence="4">Mitochondrion</location>
    </subcellularLocation>
</comment>
<comment type="similarity">
    <text evidence="5">Belongs to the mitochondrion-specific ribosomal protein mS29 family.</text>
</comment>
<feature type="transit peptide" description="Mitochondrion" evidence="2">
    <location>
        <begin position="1"/>
        <end position="54"/>
    </location>
</feature>
<feature type="chain" id="PRO_0000372636" description="Small ribosomal subunit protein mS29">
    <location>
        <begin position="55"/>
        <end position="476"/>
    </location>
</feature>
<feature type="region of interest" description="Disordered" evidence="3">
    <location>
        <begin position="58"/>
        <end position="97"/>
    </location>
</feature>
<feature type="compositionally biased region" description="Polar residues" evidence="3">
    <location>
        <begin position="65"/>
        <end position="74"/>
    </location>
</feature>
<feature type="compositionally biased region" description="Polar residues" evidence="3">
    <location>
        <begin position="86"/>
        <end position="97"/>
    </location>
</feature>
<feature type="binding site" evidence="2">
    <location>
        <begin position="200"/>
        <end position="207"/>
    </location>
    <ligand>
        <name>ATP</name>
        <dbReference type="ChEBI" id="CHEBI:30616"/>
    </ligand>
</feature>
<keyword id="KW-0067">ATP-binding</keyword>
<keyword id="KW-0496">Mitochondrion</keyword>
<keyword id="KW-0547">Nucleotide-binding</keyword>
<keyword id="KW-1185">Reference proteome</keyword>
<keyword id="KW-0687">Ribonucleoprotein</keyword>
<keyword id="KW-0689">Ribosomal protein</keyword>
<keyword id="KW-0809">Transit peptide</keyword>
<proteinExistence type="inferred from homology"/>
<dbReference type="EMBL" id="CU329671">
    <property type="protein sequence ID" value="CAA18392.1"/>
    <property type="molecule type" value="Genomic_DNA"/>
</dbReference>
<dbReference type="PIR" id="T40086">
    <property type="entry name" value="T40086"/>
</dbReference>
<dbReference type="RefSeq" id="NP_595843.1">
    <property type="nucleotide sequence ID" value="NM_001021747.2"/>
</dbReference>
<dbReference type="SMR" id="O59677"/>
<dbReference type="BioGRID" id="277035">
    <property type="interactions" value="1"/>
</dbReference>
<dbReference type="ComplexPortal" id="CPX-10315">
    <property type="entry name" value="37S mitochondrial small ribosomal subunit"/>
</dbReference>
<dbReference type="FunCoup" id="O59677">
    <property type="interactions" value="48"/>
</dbReference>
<dbReference type="STRING" id="284812.O59677"/>
<dbReference type="PaxDb" id="4896-SPBC29A3.15c.1"/>
<dbReference type="EnsemblFungi" id="SPBC29A3.15c.1">
    <property type="protein sequence ID" value="SPBC29A3.15c.1:pep"/>
    <property type="gene ID" value="SPBC29A3.15c"/>
</dbReference>
<dbReference type="GeneID" id="2540507"/>
<dbReference type="KEGG" id="spo:2540507"/>
<dbReference type="PomBase" id="SPBC29A3.15c">
    <property type="gene designation" value="rsm23"/>
</dbReference>
<dbReference type="VEuPathDB" id="FungiDB:SPBC29A3.15c"/>
<dbReference type="eggNOG" id="KOG3928">
    <property type="taxonomic scope" value="Eukaryota"/>
</dbReference>
<dbReference type="HOGENOM" id="CLU_044511_0_0_1"/>
<dbReference type="InParanoid" id="O59677"/>
<dbReference type="OMA" id="GLAHWMT"/>
<dbReference type="PhylomeDB" id="O59677"/>
<dbReference type="PRO" id="PR:O59677"/>
<dbReference type="Proteomes" id="UP000002485">
    <property type="component" value="Chromosome II"/>
</dbReference>
<dbReference type="GO" id="GO:0005763">
    <property type="term" value="C:mitochondrial small ribosomal subunit"/>
    <property type="evidence" value="ECO:0000318"/>
    <property type="project" value="GO_Central"/>
</dbReference>
<dbReference type="GO" id="GO:0005739">
    <property type="term" value="C:mitochondrion"/>
    <property type="evidence" value="ECO:0007005"/>
    <property type="project" value="PomBase"/>
</dbReference>
<dbReference type="GO" id="GO:0005524">
    <property type="term" value="F:ATP binding"/>
    <property type="evidence" value="ECO:0007669"/>
    <property type="project" value="UniProtKB-KW"/>
</dbReference>
<dbReference type="GO" id="GO:0003735">
    <property type="term" value="F:structural constituent of ribosome"/>
    <property type="evidence" value="ECO:0000318"/>
    <property type="project" value="GO_Central"/>
</dbReference>
<dbReference type="GO" id="GO:0032543">
    <property type="term" value="P:mitochondrial translation"/>
    <property type="evidence" value="ECO:0000250"/>
    <property type="project" value="PomBase"/>
</dbReference>
<dbReference type="InterPro" id="IPR019368">
    <property type="entry name" value="Ribosomal_mS29"/>
</dbReference>
<dbReference type="InterPro" id="IPR017082">
    <property type="entry name" value="Ribosomal_mS29_fun"/>
</dbReference>
<dbReference type="PANTHER" id="PTHR12810">
    <property type="entry name" value="MITOCHONDRIAL 28S RIBOSOMAL PROTEIN S29"/>
    <property type="match status" value="1"/>
</dbReference>
<dbReference type="PANTHER" id="PTHR12810:SF0">
    <property type="entry name" value="SMALL RIBOSOMAL SUBUNIT PROTEIN MS29"/>
    <property type="match status" value="1"/>
</dbReference>
<dbReference type="Pfam" id="PF10236">
    <property type="entry name" value="DAP3"/>
    <property type="match status" value="1"/>
</dbReference>
<dbReference type="PIRSF" id="PIRSF036996">
    <property type="entry name" value="RSM23"/>
    <property type="match status" value="1"/>
</dbReference>
<reference key="1">
    <citation type="journal article" date="2002" name="Nature">
        <title>The genome sequence of Schizosaccharomyces pombe.</title>
        <authorList>
            <person name="Wood V."/>
            <person name="Gwilliam R."/>
            <person name="Rajandream M.A."/>
            <person name="Lyne M.H."/>
            <person name="Lyne R."/>
            <person name="Stewart A."/>
            <person name="Sgouros J.G."/>
            <person name="Peat N."/>
            <person name="Hayles J."/>
            <person name="Baker S.G."/>
            <person name="Basham D."/>
            <person name="Bowman S."/>
            <person name="Brooks K."/>
            <person name="Brown D."/>
            <person name="Brown S."/>
            <person name="Chillingworth T."/>
            <person name="Churcher C.M."/>
            <person name="Collins M."/>
            <person name="Connor R."/>
            <person name="Cronin A."/>
            <person name="Davis P."/>
            <person name="Feltwell T."/>
            <person name="Fraser A."/>
            <person name="Gentles S."/>
            <person name="Goble A."/>
            <person name="Hamlin N."/>
            <person name="Harris D.E."/>
            <person name="Hidalgo J."/>
            <person name="Hodgson G."/>
            <person name="Holroyd S."/>
            <person name="Hornsby T."/>
            <person name="Howarth S."/>
            <person name="Huckle E.J."/>
            <person name="Hunt S."/>
            <person name="Jagels K."/>
            <person name="James K.D."/>
            <person name="Jones L."/>
            <person name="Jones M."/>
            <person name="Leather S."/>
            <person name="McDonald S."/>
            <person name="McLean J."/>
            <person name="Mooney P."/>
            <person name="Moule S."/>
            <person name="Mungall K.L."/>
            <person name="Murphy L.D."/>
            <person name="Niblett D."/>
            <person name="Odell C."/>
            <person name="Oliver K."/>
            <person name="O'Neil S."/>
            <person name="Pearson D."/>
            <person name="Quail M.A."/>
            <person name="Rabbinowitsch E."/>
            <person name="Rutherford K.M."/>
            <person name="Rutter S."/>
            <person name="Saunders D."/>
            <person name="Seeger K."/>
            <person name="Sharp S."/>
            <person name="Skelton J."/>
            <person name="Simmonds M.N."/>
            <person name="Squares R."/>
            <person name="Squares S."/>
            <person name="Stevens K."/>
            <person name="Taylor K."/>
            <person name="Taylor R.G."/>
            <person name="Tivey A."/>
            <person name="Walsh S.V."/>
            <person name="Warren T."/>
            <person name="Whitehead S."/>
            <person name="Woodward J.R."/>
            <person name="Volckaert G."/>
            <person name="Aert R."/>
            <person name="Robben J."/>
            <person name="Grymonprez B."/>
            <person name="Weltjens I."/>
            <person name="Vanstreels E."/>
            <person name="Rieger M."/>
            <person name="Schaefer M."/>
            <person name="Mueller-Auer S."/>
            <person name="Gabel C."/>
            <person name="Fuchs M."/>
            <person name="Duesterhoeft A."/>
            <person name="Fritzc C."/>
            <person name="Holzer E."/>
            <person name="Moestl D."/>
            <person name="Hilbert H."/>
            <person name="Borzym K."/>
            <person name="Langer I."/>
            <person name="Beck A."/>
            <person name="Lehrach H."/>
            <person name="Reinhardt R."/>
            <person name="Pohl T.M."/>
            <person name="Eger P."/>
            <person name="Zimmermann W."/>
            <person name="Wedler H."/>
            <person name="Wambutt R."/>
            <person name="Purnelle B."/>
            <person name="Goffeau A."/>
            <person name="Cadieu E."/>
            <person name="Dreano S."/>
            <person name="Gloux S."/>
            <person name="Lelaure V."/>
            <person name="Mottier S."/>
            <person name="Galibert F."/>
            <person name="Aves S.J."/>
            <person name="Xiang Z."/>
            <person name="Hunt C."/>
            <person name="Moore K."/>
            <person name="Hurst S.M."/>
            <person name="Lucas M."/>
            <person name="Rochet M."/>
            <person name="Gaillardin C."/>
            <person name="Tallada V.A."/>
            <person name="Garzon A."/>
            <person name="Thode G."/>
            <person name="Daga R.R."/>
            <person name="Cruzado L."/>
            <person name="Jimenez J."/>
            <person name="Sanchez M."/>
            <person name="del Rey F."/>
            <person name="Benito J."/>
            <person name="Dominguez A."/>
            <person name="Revuelta J.L."/>
            <person name="Moreno S."/>
            <person name="Armstrong J."/>
            <person name="Forsburg S.L."/>
            <person name="Cerutti L."/>
            <person name="Lowe T."/>
            <person name="McCombie W.R."/>
            <person name="Paulsen I."/>
            <person name="Potashkin J."/>
            <person name="Shpakovski G.V."/>
            <person name="Ussery D."/>
            <person name="Barrell B.G."/>
            <person name="Nurse P."/>
        </authorList>
    </citation>
    <scope>NUCLEOTIDE SEQUENCE [LARGE SCALE GENOMIC DNA]</scope>
    <source>
        <strain>972 / ATCC 24843</strain>
    </source>
</reference>
<reference key="2">
    <citation type="journal article" date="2006" name="Nat. Biotechnol.">
        <title>ORFeome cloning and global analysis of protein localization in the fission yeast Schizosaccharomyces pombe.</title>
        <authorList>
            <person name="Matsuyama A."/>
            <person name="Arai R."/>
            <person name="Yashiroda Y."/>
            <person name="Shirai A."/>
            <person name="Kamata A."/>
            <person name="Sekido S."/>
            <person name="Kobayashi Y."/>
            <person name="Hashimoto A."/>
            <person name="Hamamoto M."/>
            <person name="Hiraoka Y."/>
            <person name="Horinouchi S."/>
            <person name="Yoshida M."/>
        </authorList>
    </citation>
    <scope>SUBCELLULAR LOCATION [LARGE SCALE ANALYSIS]</scope>
</reference>
<name>RT23_SCHPO</name>
<protein>
    <recommendedName>
        <fullName evidence="5">Small ribosomal subunit protein mS29</fullName>
    </recommendedName>
    <alternativeName>
        <fullName>37S ribosomal protein S23, mitochondrial</fullName>
    </alternativeName>
</protein>
<accession>O59677</accession>
<sequence>MLPKFRSRSSIIKNTERISNILSGGKLTVCGSKLGGLYTFEKCTFNKYYSSSQYQHTGRPVGGNIHSSSNQQRQKNSEAPRINEIPPSTSSVEKSTTIPNSSVVLDHLLNEGENTLEEVKPSEIHPHMSWSSKSEGKMFKIPEELLNKLNGFGALEKQKKSFSFFTSASLLHRKITTELVNVLQRSKDQGTKDGRFLLDGAPGSGRSIALIQAELFALSQPNFIVLPVHNCEGWVNSTSSYGYDEQLKLWVQPDLIKGFLTSVMKTNSDKLKKLKTFESHELLQNECIPAGTDLLSFLHKLIASSNAPKSLEIFLQELNNNTKSNSNMKVLLVIDNISILSVVTKYKDKKNNFLPPKDFYFINLLFKYISGSLTFNRGTVLAATSSQPRVSTPSLDIALGVAHRNPYKSSDETILDSLQSVHILNMEPYTLDESRRMMEYLVSSNVCLEKVDNYLQNHVLSGGNPRKFFDACTRLA</sequence>
<evidence type="ECO:0000250" key="1">
    <source>
        <dbReference type="UniProtKB" id="Q01163"/>
    </source>
</evidence>
<evidence type="ECO:0000255" key="2"/>
<evidence type="ECO:0000256" key="3">
    <source>
        <dbReference type="SAM" id="MobiDB-lite"/>
    </source>
</evidence>
<evidence type="ECO:0000269" key="4">
    <source>
    </source>
</evidence>
<evidence type="ECO:0000305" key="5"/>